<sequence>MTTQNFLAEIGTEELPPKALKKLATAFAENVENELNQADLSFEKVEWFAAPRRLAVKALGLATAQPSKEIEKRGPAVSAAFDADGKPTKAAEGWARGCGITVDQADRIATDKGEWLVHRAVIEGQPTKNLLVDIISRSLANLPIPKMMRWGDKTEQFVRPVHTVTLFFGSELIEGEILGVKINNVIRGHRFLGEREFTISHADEYLTALREKGMVVADFNERKALILAKSQEKATALGGVADIEEDLLDEVTSLVEFPNVLTAKFEERFLAVPAEALVYTMKGDQKYFPIYDKDGKLLPHFIFVSNINPEDPTAIIEGNEKVVRPRLTDAEFFFKTDLKQRLEDRLPRLETVLFQQQLGTLRDKTARIEALAGEIAAQIGADKAKAERAGLLSKCDLMTNMVFEFTDTQGVMGMHYARHDGEDEEVAVALNEQYMPRFAGDELPKSLVACSVALADKFDTLTGIFGIGQAPKGSADPFALRRAALGSLRIIVEKNLPLDLEDLVRKSAALFGNKLTNANVVEDVVDFMLGRFRAWYQDEGIAVDVIQAVLARRPTKPADFDARVRAVSHFRTLDSAEALAAANKRVSNILAKVEGEISIEIDRTLLVEAEEKALAEQVISLQTELAPTFANGEYQTALDRLASLRETVDNFFEKVMVNAEDANLRRNRQAILNNLRNLFLQVADISVLQ</sequence>
<organism>
    <name type="scientific">Actinobacillus pleuropneumoniae serotype 5b (strain L20)</name>
    <dbReference type="NCBI Taxonomy" id="416269"/>
    <lineage>
        <taxon>Bacteria</taxon>
        <taxon>Pseudomonadati</taxon>
        <taxon>Pseudomonadota</taxon>
        <taxon>Gammaproteobacteria</taxon>
        <taxon>Pasteurellales</taxon>
        <taxon>Pasteurellaceae</taxon>
        <taxon>Actinobacillus</taxon>
    </lineage>
</organism>
<reference key="1">
    <citation type="journal article" date="2008" name="J. Bacteriol.">
        <title>The complete genome sequence of Actinobacillus pleuropneumoniae L20 (serotype 5b).</title>
        <authorList>
            <person name="Foote S.J."/>
            <person name="Bosse J.T."/>
            <person name="Bouevitch A.B."/>
            <person name="Langford P.R."/>
            <person name="Young N.M."/>
            <person name="Nash J.H.E."/>
        </authorList>
    </citation>
    <scope>NUCLEOTIDE SEQUENCE [LARGE SCALE GENOMIC DNA]</scope>
    <source>
        <strain>L20</strain>
    </source>
</reference>
<feature type="chain" id="PRO_1000006348" description="Glycine--tRNA ligase beta subunit">
    <location>
        <begin position="1"/>
        <end position="689"/>
    </location>
</feature>
<proteinExistence type="inferred from homology"/>
<accession>A3N3A1</accession>
<protein>
    <recommendedName>
        <fullName evidence="1">Glycine--tRNA ligase beta subunit</fullName>
        <ecNumber evidence="1">6.1.1.14</ecNumber>
    </recommendedName>
    <alternativeName>
        <fullName evidence="1">Glycyl-tRNA synthetase beta subunit</fullName>
        <shortName evidence="1">GlyRS</shortName>
    </alternativeName>
</protein>
<dbReference type="EC" id="6.1.1.14" evidence="1"/>
<dbReference type="EMBL" id="CP000569">
    <property type="protein sequence ID" value="ABN74887.1"/>
    <property type="molecule type" value="Genomic_DNA"/>
</dbReference>
<dbReference type="RefSeq" id="WP_009875135.1">
    <property type="nucleotide sequence ID" value="NC_009053.1"/>
</dbReference>
<dbReference type="SMR" id="A3N3A1"/>
<dbReference type="STRING" id="416269.APL_1803"/>
<dbReference type="EnsemblBacteria" id="ABN74887">
    <property type="protein sequence ID" value="ABN74887"/>
    <property type="gene ID" value="APL_1803"/>
</dbReference>
<dbReference type="KEGG" id="apl:APL_1803"/>
<dbReference type="PATRIC" id="fig|416269.6.peg.1874"/>
<dbReference type="eggNOG" id="COG0751">
    <property type="taxonomic scope" value="Bacteria"/>
</dbReference>
<dbReference type="HOGENOM" id="CLU_007220_2_2_6"/>
<dbReference type="Proteomes" id="UP000001432">
    <property type="component" value="Chromosome"/>
</dbReference>
<dbReference type="GO" id="GO:0005829">
    <property type="term" value="C:cytosol"/>
    <property type="evidence" value="ECO:0007669"/>
    <property type="project" value="TreeGrafter"/>
</dbReference>
<dbReference type="GO" id="GO:0004814">
    <property type="term" value="F:arginine-tRNA ligase activity"/>
    <property type="evidence" value="ECO:0007669"/>
    <property type="project" value="InterPro"/>
</dbReference>
<dbReference type="GO" id="GO:0005524">
    <property type="term" value="F:ATP binding"/>
    <property type="evidence" value="ECO:0007669"/>
    <property type="project" value="UniProtKB-UniRule"/>
</dbReference>
<dbReference type="GO" id="GO:0004820">
    <property type="term" value="F:glycine-tRNA ligase activity"/>
    <property type="evidence" value="ECO:0007669"/>
    <property type="project" value="UniProtKB-UniRule"/>
</dbReference>
<dbReference type="GO" id="GO:0006420">
    <property type="term" value="P:arginyl-tRNA aminoacylation"/>
    <property type="evidence" value="ECO:0007669"/>
    <property type="project" value="InterPro"/>
</dbReference>
<dbReference type="GO" id="GO:0006426">
    <property type="term" value="P:glycyl-tRNA aminoacylation"/>
    <property type="evidence" value="ECO:0007669"/>
    <property type="project" value="UniProtKB-UniRule"/>
</dbReference>
<dbReference type="HAMAP" id="MF_00255">
    <property type="entry name" value="Gly_tRNA_synth_beta"/>
    <property type="match status" value="1"/>
</dbReference>
<dbReference type="InterPro" id="IPR008909">
    <property type="entry name" value="DALR_anticod-bd"/>
</dbReference>
<dbReference type="InterPro" id="IPR015944">
    <property type="entry name" value="Gly-tRNA-synth_bsu"/>
</dbReference>
<dbReference type="InterPro" id="IPR006194">
    <property type="entry name" value="Gly-tRNA-synth_heterodimer"/>
</dbReference>
<dbReference type="NCBIfam" id="TIGR00211">
    <property type="entry name" value="glyS"/>
    <property type="match status" value="1"/>
</dbReference>
<dbReference type="PANTHER" id="PTHR30075:SF2">
    <property type="entry name" value="GLYCINE--TRNA LIGASE, CHLOROPLASTIC_MITOCHONDRIAL 2"/>
    <property type="match status" value="1"/>
</dbReference>
<dbReference type="PANTHER" id="PTHR30075">
    <property type="entry name" value="GLYCYL-TRNA SYNTHETASE"/>
    <property type="match status" value="1"/>
</dbReference>
<dbReference type="Pfam" id="PF05746">
    <property type="entry name" value="DALR_1"/>
    <property type="match status" value="1"/>
</dbReference>
<dbReference type="Pfam" id="PF02092">
    <property type="entry name" value="tRNA_synt_2f"/>
    <property type="match status" value="1"/>
</dbReference>
<dbReference type="PRINTS" id="PR01045">
    <property type="entry name" value="TRNASYNTHGB"/>
</dbReference>
<dbReference type="SUPFAM" id="SSF109604">
    <property type="entry name" value="HD-domain/PDEase-like"/>
    <property type="match status" value="1"/>
</dbReference>
<dbReference type="PROSITE" id="PS50861">
    <property type="entry name" value="AA_TRNA_LIGASE_II_GLYAB"/>
    <property type="match status" value="1"/>
</dbReference>
<comment type="catalytic activity">
    <reaction evidence="1">
        <text>tRNA(Gly) + glycine + ATP = glycyl-tRNA(Gly) + AMP + diphosphate</text>
        <dbReference type="Rhea" id="RHEA:16013"/>
        <dbReference type="Rhea" id="RHEA-COMP:9664"/>
        <dbReference type="Rhea" id="RHEA-COMP:9683"/>
        <dbReference type="ChEBI" id="CHEBI:30616"/>
        <dbReference type="ChEBI" id="CHEBI:33019"/>
        <dbReference type="ChEBI" id="CHEBI:57305"/>
        <dbReference type="ChEBI" id="CHEBI:78442"/>
        <dbReference type="ChEBI" id="CHEBI:78522"/>
        <dbReference type="ChEBI" id="CHEBI:456215"/>
        <dbReference type="EC" id="6.1.1.14"/>
    </reaction>
</comment>
<comment type="subunit">
    <text evidence="1">Tetramer of two alpha and two beta subunits.</text>
</comment>
<comment type="subcellular location">
    <subcellularLocation>
        <location evidence="1">Cytoplasm</location>
    </subcellularLocation>
</comment>
<comment type="similarity">
    <text evidence="1">Belongs to the class-II aminoacyl-tRNA synthetase family.</text>
</comment>
<name>SYGB_ACTP2</name>
<evidence type="ECO:0000255" key="1">
    <source>
        <dbReference type="HAMAP-Rule" id="MF_00255"/>
    </source>
</evidence>
<gene>
    <name evidence="1" type="primary">glyS</name>
    <name type="ordered locus">APL_1803</name>
</gene>
<keyword id="KW-0030">Aminoacyl-tRNA synthetase</keyword>
<keyword id="KW-0067">ATP-binding</keyword>
<keyword id="KW-0963">Cytoplasm</keyword>
<keyword id="KW-0436">Ligase</keyword>
<keyword id="KW-0547">Nucleotide-binding</keyword>
<keyword id="KW-0648">Protein biosynthesis</keyword>
<keyword id="KW-1185">Reference proteome</keyword>